<feature type="chain" id="PRO_0000081168" description="DNA-binding transcriptional regulator NtrC">
    <location>
        <begin position="1"/>
        <end position="469"/>
    </location>
</feature>
<feature type="domain" description="Response regulatory" evidence="3">
    <location>
        <begin position="5"/>
        <end position="119"/>
    </location>
</feature>
<feature type="domain" description="Sigma-54 factor interaction" evidence="4">
    <location>
        <begin position="140"/>
        <end position="369"/>
    </location>
</feature>
<feature type="DNA-binding region" description="H-T-H motif" evidence="1">
    <location>
        <begin position="445"/>
        <end position="464"/>
    </location>
</feature>
<feature type="binding site" evidence="4">
    <location>
        <begin position="168"/>
        <end position="175"/>
    </location>
    <ligand>
        <name>ATP</name>
        <dbReference type="ChEBI" id="CHEBI:30616"/>
    </ligand>
</feature>
<feature type="binding site" evidence="4">
    <location>
        <begin position="231"/>
        <end position="240"/>
    </location>
    <ligand>
        <name>ATP</name>
        <dbReference type="ChEBI" id="CHEBI:30616"/>
    </ligand>
</feature>
<feature type="modified residue" description="4-aspartylphosphate" evidence="3">
    <location>
        <position position="54"/>
    </location>
</feature>
<feature type="mutagenesis site" description="Prevents transcriptional activation at sigma 54-dependent promoters both in vivo and in vitro." evidence="5">
    <original>S</original>
    <variation>A</variation>
    <location>
        <position position="170"/>
    </location>
</feature>
<feature type="sequence conflict" description="In Ref. 2; CAA26473." evidence="6" ref="2">
    <original>A</original>
    <variation>R</variation>
    <location>
        <position position="144"/>
    </location>
</feature>
<name>NTRC_KLEPN</name>
<keyword id="KW-0010">Activator</keyword>
<keyword id="KW-0067">ATP-binding</keyword>
<keyword id="KW-0963">Cytoplasm</keyword>
<keyword id="KW-0238">DNA-binding</keyword>
<keyword id="KW-0535">Nitrogen fixation</keyword>
<keyword id="KW-0547">Nucleotide-binding</keyword>
<keyword id="KW-0597">Phosphoprotein</keyword>
<keyword id="KW-0678">Repressor</keyword>
<keyword id="KW-0804">Transcription</keyword>
<keyword id="KW-0805">Transcription regulation</keyword>
<keyword id="KW-0902">Two-component regulatory system</keyword>
<proteinExistence type="evidence at protein level"/>
<reference key="1">
    <citation type="journal article" date="1986" name="EMBO J.">
        <title>Sequence and domain relationships of ntrC and nifA from Klebsiella pneumoniae: homologies to other regulatory proteins.</title>
        <authorList>
            <person name="Drummond M."/>
            <person name="Whitty P."/>
            <person name="Wootton J."/>
        </authorList>
    </citation>
    <scope>NUCLEOTIDE SEQUENCE [GENOMIC DNA]</scope>
</reference>
<reference key="2">
    <citation type="journal article" date="1985" name="Nucleic Acids Res.">
        <title>Nitrogen fixation specific regulatory genes of Klebsiella pneumoniae and Rhizobium meliloti share homology with the general nitrogen regulatory gene ntrC of K. pneumoniae.</title>
        <authorList>
            <person name="Buikema W.J."/>
            <person name="Szeto W.W."/>
            <person name="Lemley P.V."/>
            <person name="Orme-Johnson W.H."/>
            <person name="Ausubel F.M."/>
        </authorList>
    </citation>
    <scope>NUCLEOTIDE SEQUENCE [GENOMIC DNA]</scope>
</reference>
<reference key="3">
    <citation type="journal article" date="1991" name="Nucleic Acids Res.">
        <title>Influence of a mutation in the putative nucleotide binding site of the nitrogen regulatory protein NTRC on its positive control function.</title>
        <authorList>
            <person name="Austin S."/>
            <person name="Kundrot C."/>
            <person name="Dixon R."/>
        </authorList>
    </citation>
    <scope>MUTAGENESIS OF SER-170</scope>
</reference>
<reference key="4">
    <citation type="journal article" date="1992" name="EMBO J.">
        <title>The prokaryotic enhancer binding protein NTRC has an ATPase activity which is phosphorylation and DNA dependent.</title>
        <authorList>
            <person name="Austin S."/>
            <person name="Dixon R."/>
        </authorList>
    </citation>
    <scope>ATPASE ACTIVITY</scope>
</reference>
<comment type="function">
    <text evidence="2">Member of the two-component regulatory system NtrB/NtrC, which controls expression of the nitrogen-regulated (ntr) genes in response to nitrogen limitation. Phosphorylated NtrC binds directly to DNA and stimulates the formation of open promoter-sigma54-RNA polymerase complexes.</text>
</comment>
<comment type="subcellular location">
    <subcellularLocation>
        <location evidence="2">Cytoplasm</location>
    </subcellularLocation>
</comment>
<comment type="PTM">
    <text evidence="2">Phosphorylated and dephosphorylated by NtrB.</text>
</comment>
<sequence>MQRGIAWIVDDDSSIRWVLERALTGAGLSCTTFESGNEVLDALTTKTPDVLLSDIRMPGMDGLALLKQIKQRHPMLPVIIMTAHSDLDAAVSAYQQGAFDYLPKPFDIDEAVALVDRAISHYQEQQQPRNAPINSPTADIIGEAPAMQDVFRIIGRLSRSSISVLINGESGTGKELVAHALHRHSPRAKAPFIALNMAAIPKDLIESELFGHEKGAFTGANTVRQGRFEQADGGTLFLDEIGDMPLDVQTRLLRVLADGQFYRVGGYAPVKVDVRIIAATHQNLELRVQEGKFREDLFHRLNVIRVHLPPLRERREDIPRLARHFLQIAARELGVEAKQLHPETEMALTRLAWPGNVRQLENTCRWLTVMAAGQEVLTQDLPSELFETAIPDNPTQMLPDSWATLLGQWADRALRSGHQNLLSEAQPEMERTLLTTALRHTQGHKQEAARLLGWGRNTLTRKLKELGME</sequence>
<protein>
    <recommendedName>
        <fullName evidence="2">DNA-binding transcriptional regulator NtrC</fullName>
    </recommendedName>
    <alternativeName>
        <fullName evidence="2">Nitrogen regulation protein NR(I)</fullName>
    </alternativeName>
    <alternativeName>
        <fullName evidence="2">Nitrogen regulator I</fullName>
        <shortName evidence="2">NRI</shortName>
    </alternativeName>
</protein>
<accession>P03029</accession>
<dbReference type="EMBL" id="X02617">
    <property type="protein sequence ID" value="CAA26473.1"/>
    <property type="molecule type" value="Genomic_DNA"/>
</dbReference>
<dbReference type="PIR" id="B91060">
    <property type="entry name" value="RGKBCP"/>
</dbReference>
<dbReference type="SMR" id="P03029"/>
<dbReference type="GO" id="GO:0005737">
    <property type="term" value="C:cytoplasm"/>
    <property type="evidence" value="ECO:0007669"/>
    <property type="project" value="UniProtKB-SubCell"/>
</dbReference>
<dbReference type="GO" id="GO:0005524">
    <property type="term" value="F:ATP binding"/>
    <property type="evidence" value="ECO:0007669"/>
    <property type="project" value="UniProtKB-KW"/>
</dbReference>
<dbReference type="GO" id="GO:0016887">
    <property type="term" value="F:ATP hydrolysis activity"/>
    <property type="evidence" value="ECO:0007669"/>
    <property type="project" value="InterPro"/>
</dbReference>
<dbReference type="GO" id="GO:0000156">
    <property type="term" value="F:phosphorelay response regulator activity"/>
    <property type="evidence" value="ECO:0007669"/>
    <property type="project" value="InterPro"/>
</dbReference>
<dbReference type="GO" id="GO:0043565">
    <property type="term" value="F:sequence-specific DNA binding"/>
    <property type="evidence" value="ECO:0007669"/>
    <property type="project" value="InterPro"/>
</dbReference>
<dbReference type="GO" id="GO:0009399">
    <property type="term" value="P:nitrogen fixation"/>
    <property type="evidence" value="ECO:0007669"/>
    <property type="project" value="UniProtKB-KW"/>
</dbReference>
<dbReference type="GO" id="GO:0006355">
    <property type="term" value="P:regulation of DNA-templated transcription"/>
    <property type="evidence" value="ECO:0000315"/>
    <property type="project" value="CACAO"/>
</dbReference>
<dbReference type="GO" id="GO:0006808">
    <property type="term" value="P:regulation of nitrogen utilization"/>
    <property type="evidence" value="ECO:0007669"/>
    <property type="project" value="InterPro"/>
</dbReference>
<dbReference type="CDD" id="cd00009">
    <property type="entry name" value="AAA"/>
    <property type="match status" value="1"/>
</dbReference>
<dbReference type="CDD" id="cd19919">
    <property type="entry name" value="REC_NtrC"/>
    <property type="match status" value="1"/>
</dbReference>
<dbReference type="FunFam" id="1.10.10.60:FF:000088">
    <property type="entry name" value="DNA-binding transcriptional regulator NtrC"/>
    <property type="match status" value="1"/>
</dbReference>
<dbReference type="FunFam" id="1.10.8.60:FF:000014">
    <property type="entry name" value="DNA-binding transcriptional regulator NtrC"/>
    <property type="match status" value="1"/>
</dbReference>
<dbReference type="FunFam" id="3.40.50.2300:FF:000018">
    <property type="entry name" value="DNA-binding transcriptional regulator NtrC"/>
    <property type="match status" value="1"/>
</dbReference>
<dbReference type="FunFam" id="3.40.50.300:FF:000006">
    <property type="entry name" value="DNA-binding transcriptional regulator NtrC"/>
    <property type="match status" value="1"/>
</dbReference>
<dbReference type="Gene3D" id="1.10.8.60">
    <property type="match status" value="1"/>
</dbReference>
<dbReference type="Gene3D" id="3.40.50.2300">
    <property type="match status" value="1"/>
</dbReference>
<dbReference type="Gene3D" id="1.10.10.60">
    <property type="entry name" value="Homeodomain-like"/>
    <property type="match status" value="1"/>
</dbReference>
<dbReference type="Gene3D" id="3.40.50.300">
    <property type="entry name" value="P-loop containing nucleotide triphosphate hydrolases"/>
    <property type="match status" value="1"/>
</dbReference>
<dbReference type="InterPro" id="IPR003593">
    <property type="entry name" value="AAA+_ATPase"/>
</dbReference>
<dbReference type="InterPro" id="IPR011006">
    <property type="entry name" value="CheY-like_superfamily"/>
</dbReference>
<dbReference type="InterPro" id="IPR009057">
    <property type="entry name" value="Homeodomain-like_sf"/>
</dbReference>
<dbReference type="InterPro" id="IPR002197">
    <property type="entry name" value="HTH_Fis"/>
</dbReference>
<dbReference type="InterPro" id="IPR027417">
    <property type="entry name" value="P-loop_NTPase"/>
</dbReference>
<dbReference type="InterPro" id="IPR001789">
    <property type="entry name" value="Sig_transdc_resp-reg_receiver"/>
</dbReference>
<dbReference type="InterPro" id="IPR002078">
    <property type="entry name" value="Sigma_54_int"/>
</dbReference>
<dbReference type="InterPro" id="IPR025662">
    <property type="entry name" value="Sigma_54_int_dom_ATP-bd_1"/>
</dbReference>
<dbReference type="InterPro" id="IPR025943">
    <property type="entry name" value="Sigma_54_int_dom_ATP-bd_2"/>
</dbReference>
<dbReference type="InterPro" id="IPR025944">
    <property type="entry name" value="Sigma_54_int_dom_CS"/>
</dbReference>
<dbReference type="InterPro" id="IPR010114">
    <property type="entry name" value="Transcript_reg_NtrC"/>
</dbReference>
<dbReference type="NCBIfam" id="TIGR01818">
    <property type="entry name" value="ntrC"/>
    <property type="match status" value="1"/>
</dbReference>
<dbReference type="NCBIfam" id="NF008176">
    <property type="entry name" value="PRK10923.1"/>
    <property type="match status" value="1"/>
</dbReference>
<dbReference type="PANTHER" id="PTHR32071:SF95">
    <property type="entry name" value="DNA-BINDING TRANSCRIPTIONAL REGULATOR NTRC"/>
    <property type="match status" value="1"/>
</dbReference>
<dbReference type="PANTHER" id="PTHR32071">
    <property type="entry name" value="TRANSCRIPTIONAL REGULATORY PROTEIN"/>
    <property type="match status" value="1"/>
</dbReference>
<dbReference type="Pfam" id="PF02954">
    <property type="entry name" value="HTH_8"/>
    <property type="match status" value="1"/>
</dbReference>
<dbReference type="Pfam" id="PF00072">
    <property type="entry name" value="Response_reg"/>
    <property type="match status" value="1"/>
</dbReference>
<dbReference type="Pfam" id="PF00158">
    <property type="entry name" value="Sigma54_activat"/>
    <property type="match status" value="1"/>
</dbReference>
<dbReference type="PRINTS" id="PR01590">
    <property type="entry name" value="HTHFIS"/>
</dbReference>
<dbReference type="SMART" id="SM00382">
    <property type="entry name" value="AAA"/>
    <property type="match status" value="1"/>
</dbReference>
<dbReference type="SMART" id="SM00448">
    <property type="entry name" value="REC"/>
    <property type="match status" value="1"/>
</dbReference>
<dbReference type="SUPFAM" id="SSF52172">
    <property type="entry name" value="CheY-like"/>
    <property type="match status" value="1"/>
</dbReference>
<dbReference type="SUPFAM" id="SSF46689">
    <property type="entry name" value="Homeodomain-like"/>
    <property type="match status" value="1"/>
</dbReference>
<dbReference type="SUPFAM" id="SSF52540">
    <property type="entry name" value="P-loop containing nucleoside triphosphate hydrolases"/>
    <property type="match status" value="1"/>
</dbReference>
<dbReference type="PROSITE" id="PS50110">
    <property type="entry name" value="RESPONSE_REGULATORY"/>
    <property type="match status" value="1"/>
</dbReference>
<dbReference type="PROSITE" id="PS00675">
    <property type="entry name" value="SIGMA54_INTERACT_1"/>
    <property type="match status" value="1"/>
</dbReference>
<dbReference type="PROSITE" id="PS00676">
    <property type="entry name" value="SIGMA54_INTERACT_2"/>
    <property type="match status" value="1"/>
</dbReference>
<dbReference type="PROSITE" id="PS00688">
    <property type="entry name" value="SIGMA54_INTERACT_3"/>
    <property type="match status" value="1"/>
</dbReference>
<dbReference type="PROSITE" id="PS50045">
    <property type="entry name" value="SIGMA54_INTERACT_4"/>
    <property type="match status" value="1"/>
</dbReference>
<gene>
    <name type="primary">ntrC</name>
</gene>
<organism>
    <name type="scientific">Klebsiella pneumoniae</name>
    <dbReference type="NCBI Taxonomy" id="573"/>
    <lineage>
        <taxon>Bacteria</taxon>
        <taxon>Pseudomonadati</taxon>
        <taxon>Pseudomonadota</taxon>
        <taxon>Gammaproteobacteria</taxon>
        <taxon>Enterobacterales</taxon>
        <taxon>Enterobacteriaceae</taxon>
        <taxon>Klebsiella/Raoultella group</taxon>
        <taxon>Klebsiella</taxon>
        <taxon>Klebsiella pneumoniae complex</taxon>
    </lineage>
</organism>
<evidence type="ECO:0000250" key="1"/>
<evidence type="ECO:0000250" key="2">
    <source>
        <dbReference type="UniProtKB" id="P0AFB8"/>
    </source>
</evidence>
<evidence type="ECO:0000255" key="3">
    <source>
        <dbReference type="PROSITE-ProRule" id="PRU00169"/>
    </source>
</evidence>
<evidence type="ECO:0000255" key="4">
    <source>
        <dbReference type="PROSITE-ProRule" id="PRU00193"/>
    </source>
</evidence>
<evidence type="ECO:0000269" key="5">
    <source>
    </source>
</evidence>
<evidence type="ECO:0000305" key="6"/>